<dbReference type="EC" id="6.3.4.5" evidence="1"/>
<dbReference type="EMBL" id="CP000300">
    <property type="protein sequence ID" value="ABE51823.1"/>
    <property type="molecule type" value="Genomic_DNA"/>
</dbReference>
<dbReference type="RefSeq" id="WP_011498976.1">
    <property type="nucleotide sequence ID" value="NC_007955.1"/>
</dbReference>
<dbReference type="SMR" id="Q12XK3"/>
<dbReference type="STRING" id="259564.Mbur_0873"/>
<dbReference type="GeneID" id="3996871"/>
<dbReference type="KEGG" id="mbu:Mbur_0873"/>
<dbReference type="HOGENOM" id="CLU_032784_4_0_2"/>
<dbReference type="OrthoDB" id="5877at2157"/>
<dbReference type="UniPathway" id="UPA00068">
    <property type="reaction ID" value="UER00113"/>
</dbReference>
<dbReference type="Proteomes" id="UP000001979">
    <property type="component" value="Chromosome"/>
</dbReference>
<dbReference type="GO" id="GO:0005737">
    <property type="term" value="C:cytoplasm"/>
    <property type="evidence" value="ECO:0007669"/>
    <property type="project" value="UniProtKB-SubCell"/>
</dbReference>
<dbReference type="GO" id="GO:0004055">
    <property type="term" value="F:argininosuccinate synthase activity"/>
    <property type="evidence" value="ECO:0007669"/>
    <property type="project" value="UniProtKB-UniRule"/>
</dbReference>
<dbReference type="GO" id="GO:0005524">
    <property type="term" value="F:ATP binding"/>
    <property type="evidence" value="ECO:0007669"/>
    <property type="project" value="UniProtKB-UniRule"/>
</dbReference>
<dbReference type="GO" id="GO:0000053">
    <property type="term" value="P:argininosuccinate metabolic process"/>
    <property type="evidence" value="ECO:0007669"/>
    <property type="project" value="TreeGrafter"/>
</dbReference>
<dbReference type="GO" id="GO:0006526">
    <property type="term" value="P:L-arginine biosynthetic process"/>
    <property type="evidence" value="ECO:0007669"/>
    <property type="project" value="UniProtKB-UniRule"/>
</dbReference>
<dbReference type="GO" id="GO:0000050">
    <property type="term" value="P:urea cycle"/>
    <property type="evidence" value="ECO:0007669"/>
    <property type="project" value="TreeGrafter"/>
</dbReference>
<dbReference type="CDD" id="cd01999">
    <property type="entry name" value="ASS"/>
    <property type="match status" value="1"/>
</dbReference>
<dbReference type="FunFam" id="3.40.50.620:FF:000019">
    <property type="entry name" value="Argininosuccinate synthase"/>
    <property type="match status" value="1"/>
</dbReference>
<dbReference type="FunFam" id="3.90.1260.10:FF:000007">
    <property type="entry name" value="Argininosuccinate synthase"/>
    <property type="match status" value="1"/>
</dbReference>
<dbReference type="Gene3D" id="3.90.1260.10">
    <property type="entry name" value="Argininosuccinate synthetase, chain A, domain 2"/>
    <property type="match status" value="1"/>
</dbReference>
<dbReference type="Gene3D" id="3.40.50.620">
    <property type="entry name" value="HUPs"/>
    <property type="match status" value="1"/>
</dbReference>
<dbReference type="HAMAP" id="MF_00005">
    <property type="entry name" value="Arg_succ_synth_type1"/>
    <property type="match status" value="1"/>
</dbReference>
<dbReference type="InterPro" id="IPR048268">
    <property type="entry name" value="Arginosuc_syn_C"/>
</dbReference>
<dbReference type="InterPro" id="IPR048267">
    <property type="entry name" value="Arginosuc_syn_N"/>
</dbReference>
<dbReference type="InterPro" id="IPR001518">
    <property type="entry name" value="Arginosuc_synth"/>
</dbReference>
<dbReference type="InterPro" id="IPR018223">
    <property type="entry name" value="Arginosuc_synth_CS"/>
</dbReference>
<dbReference type="InterPro" id="IPR023434">
    <property type="entry name" value="Arginosuc_synth_type_1_subfam"/>
</dbReference>
<dbReference type="InterPro" id="IPR024074">
    <property type="entry name" value="AS_cat/multimer_dom_body"/>
</dbReference>
<dbReference type="InterPro" id="IPR014729">
    <property type="entry name" value="Rossmann-like_a/b/a_fold"/>
</dbReference>
<dbReference type="NCBIfam" id="TIGR00032">
    <property type="entry name" value="argG"/>
    <property type="match status" value="1"/>
</dbReference>
<dbReference type="NCBIfam" id="NF001770">
    <property type="entry name" value="PRK00509.1"/>
    <property type="match status" value="1"/>
</dbReference>
<dbReference type="NCBIfam" id="NF010392">
    <property type="entry name" value="PRK13820.1"/>
    <property type="match status" value="1"/>
</dbReference>
<dbReference type="PANTHER" id="PTHR11587">
    <property type="entry name" value="ARGININOSUCCINATE SYNTHASE"/>
    <property type="match status" value="1"/>
</dbReference>
<dbReference type="PANTHER" id="PTHR11587:SF2">
    <property type="entry name" value="ARGININOSUCCINATE SYNTHASE"/>
    <property type="match status" value="1"/>
</dbReference>
<dbReference type="Pfam" id="PF20979">
    <property type="entry name" value="Arginosuc_syn_C"/>
    <property type="match status" value="1"/>
</dbReference>
<dbReference type="Pfam" id="PF00764">
    <property type="entry name" value="Arginosuc_synth"/>
    <property type="match status" value="1"/>
</dbReference>
<dbReference type="SUPFAM" id="SSF52402">
    <property type="entry name" value="Adenine nucleotide alpha hydrolases-like"/>
    <property type="match status" value="1"/>
</dbReference>
<dbReference type="SUPFAM" id="SSF69864">
    <property type="entry name" value="Argininosuccinate synthetase, C-terminal domain"/>
    <property type="match status" value="1"/>
</dbReference>
<dbReference type="PROSITE" id="PS00564">
    <property type="entry name" value="ARGININOSUCCIN_SYN_1"/>
    <property type="match status" value="1"/>
</dbReference>
<dbReference type="PROSITE" id="PS00565">
    <property type="entry name" value="ARGININOSUCCIN_SYN_2"/>
    <property type="match status" value="1"/>
</dbReference>
<feature type="chain" id="PRO_0000263994" description="Argininosuccinate synthase">
    <location>
        <begin position="1"/>
        <end position="394"/>
    </location>
</feature>
<feature type="binding site" evidence="1">
    <location>
        <begin position="8"/>
        <end position="16"/>
    </location>
    <ligand>
        <name>ATP</name>
        <dbReference type="ChEBI" id="CHEBI:30616"/>
    </ligand>
</feature>
<feature type="binding site" evidence="1">
    <location>
        <position position="86"/>
    </location>
    <ligand>
        <name>L-citrulline</name>
        <dbReference type="ChEBI" id="CHEBI:57743"/>
    </ligand>
</feature>
<feature type="binding site" evidence="1">
    <location>
        <position position="91"/>
    </location>
    <ligand>
        <name>L-citrulline</name>
        <dbReference type="ChEBI" id="CHEBI:57743"/>
    </ligand>
</feature>
<feature type="binding site" evidence="1">
    <location>
        <position position="116"/>
    </location>
    <ligand>
        <name>ATP</name>
        <dbReference type="ChEBI" id="CHEBI:30616"/>
    </ligand>
</feature>
<feature type="binding site" evidence="1">
    <location>
        <position position="118"/>
    </location>
    <ligand>
        <name>L-aspartate</name>
        <dbReference type="ChEBI" id="CHEBI:29991"/>
    </ligand>
</feature>
<feature type="binding site" evidence="1">
    <location>
        <position position="122"/>
    </location>
    <ligand>
        <name>L-aspartate</name>
        <dbReference type="ChEBI" id="CHEBI:29991"/>
    </ligand>
</feature>
<feature type="binding site" evidence="1">
    <location>
        <position position="122"/>
    </location>
    <ligand>
        <name>L-citrulline</name>
        <dbReference type="ChEBI" id="CHEBI:57743"/>
    </ligand>
</feature>
<feature type="binding site" evidence="1">
    <location>
        <position position="123"/>
    </location>
    <ligand>
        <name>L-aspartate</name>
        <dbReference type="ChEBI" id="CHEBI:29991"/>
    </ligand>
</feature>
<feature type="binding site" evidence="1">
    <location>
        <position position="126"/>
    </location>
    <ligand>
        <name>L-citrulline</name>
        <dbReference type="ChEBI" id="CHEBI:57743"/>
    </ligand>
</feature>
<feature type="binding site" evidence="1">
    <location>
        <position position="172"/>
    </location>
    <ligand>
        <name>L-citrulline</name>
        <dbReference type="ChEBI" id="CHEBI:57743"/>
    </ligand>
</feature>
<feature type="binding site" evidence="1">
    <location>
        <position position="181"/>
    </location>
    <ligand>
        <name>L-citrulline</name>
        <dbReference type="ChEBI" id="CHEBI:57743"/>
    </ligand>
</feature>
<feature type="binding site" evidence="1">
    <location>
        <position position="256"/>
    </location>
    <ligand>
        <name>L-citrulline</name>
        <dbReference type="ChEBI" id="CHEBI:57743"/>
    </ligand>
</feature>
<feature type="binding site" evidence="1">
    <location>
        <position position="268"/>
    </location>
    <ligand>
        <name>L-citrulline</name>
        <dbReference type="ChEBI" id="CHEBI:57743"/>
    </ligand>
</feature>
<keyword id="KW-0028">Amino-acid biosynthesis</keyword>
<keyword id="KW-0055">Arginine biosynthesis</keyword>
<keyword id="KW-0067">ATP-binding</keyword>
<keyword id="KW-0963">Cytoplasm</keyword>
<keyword id="KW-0436">Ligase</keyword>
<keyword id="KW-0547">Nucleotide-binding</keyword>
<name>ASSY_METBU</name>
<accession>Q12XK3</accession>
<reference key="1">
    <citation type="journal article" date="2009" name="ISME J.">
        <title>The genome sequence of the psychrophilic archaeon, Methanococcoides burtonii: the role of genome evolution in cold adaptation.</title>
        <authorList>
            <person name="Allen M.A."/>
            <person name="Lauro F.M."/>
            <person name="Williams T.J."/>
            <person name="Burg D."/>
            <person name="Siddiqui K.S."/>
            <person name="De Francisci D."/>
            <person name="Chong K.W."/>
            <person name="Pilak O."/>
            <person name="Chew H.H."/>
            <person name="De Maere M.Z."/>
            <person name="Ting L."/>
            <person name="Katrib M."/>
            <person name="Ng C."/>
            <person name="Sowers K.R."/>
            <person name="Galperin M.Y."/>
            <person name="Anderson I.J."/>
            <person name="Ivanova N."/>
            <person name="Dalin E."/>
            <person name="Martinez M."/>
            <person name="Lapidus A."/>
            <person name="Hauser L."/>
            <person name="Land M."/>
            <person name="Thomas T."/>
            <person name="Cavicchioli R."/>
        </authorList>
    </citation>
    <scope>NUCLEOTIDE SEQUENCE [LARGE SCALE GENOMIC DNA]</scope>
    <source>
        <strain>DSM 6242 / NBRC 107633 / OCM 468 / ACE-M</strain>
    </source>
</reference>
<proteinExistence type="inferred from homology"/>
<comment type="catalytic activity">
    <reaction evidence="1">
        <text>L-citrulline + L-aspartate + ATP = 2-(N(omega)-L-arginino)succinate + AMP + diphosphate + H(+)</text>
        <dbReference type="Rhea" id="RHEA:10932"/>
        <dbReference type="ChEBI" id="CHEBI:15378"/>
        <dbReference type="ChEBI" id="CHEBI:29991"/>
        <dbReference type="ChEBI" id="CHEBI:30616"/>
        <dbReference type="ChEBI" id="CHEBI:33019"/>
        <dbReference type="ChEBI" id="CHEBI:57472"/>
        <dbReference type="ChEBI" id="CHEBI:57743"/>
        <dbReference type="ChEBI" id="CHEBI:456215"/>
        <dbReference type="EC" id="6.3.4.5"/>
    </reaction>
</comment>
<comment type="pathway">
    <text evidence="1">Amino-acid biosynthesis; L-arginine biosynthesis; L-arginine from L-ornithine and carbamoyl phosphate: step 2/3.</text>
</comment>
<comment type="subunit">
    <text evidence="1">Homotetramer.</text>
</comment>
<comment type="subcellular location">
    <subcellularLocation>
        <location evidence="1">Cytoplasm</location>
    </subcellularLocation>
</comment>
<comment type="similarity">
    <text evidence="1">Belongs to the argininosuccinate synthase family. Type 1 subfamily.</text>
</comment>
<sequence>MSKKVALAYSGGLDTSICIPLLKEEYGYDEVITVAVDVGQPKEDVAQAEEKAKKISDKHFTLDVREEFVNDYIFPLIRANGDYEGYVMGTSIARPLIAKKVVEIAEQEGAVALAHGCTGKGNDQLRFEAVFRLTDMDVIAPMREMNLTREWEIEYAKEHGIPVGVTTAKPWSVDENIWSRSIEGGKLEDPGYIPPEEIYKWTTAPEDAPDAQIIEIGFENGVPVSLDGQKMGGVELIEKMNIIAGTHGVGRTDMIEDRVLGLKARENYEHPAATVLLAAHKDLEKLVLTRAELKFKATVDAQWSELAYYGLVDEPLYDDLNAFIDKTQERVAGTVTMKLYKGSVLVLARTSPYALYSEELVSFDGTSIDQKDAEGFAKYHGFQARLYRKFVVKN</sequence>
<evidence type="ECO:0000255" key="1">
    <source>
        <dbReference type="HAMAP-Rule" id="MF_00005"/>
    </source>
</evidence>
<organism>
    <name type="scientific">Methanococcoides burtonii (strain DSM 6242 / NBRC 107633 / OCM 468 / ACE-M)</name>
    <dbReference type="NCBI Taxonomy" id="259564"/>
    <lineage>
        <taxon>Archaea</taxon>
        <taxon>Methanobacteriati</taxon>
        <taxon>Methanobacteriota</taxon>
        <taxon>Stenosarchaea group</taxon>
        <taxon>Methanomicrobia</taxon>
        <taxon>Methanosarcinales</taxon>
        <taxon>Methanosarcinaceae</taxon>
        <taxon>Methanococcoides</taxon>
    </lineage>
</organism>
<gene>
    <name evidence="1" type="primary">argG</name>
    <name type="ordered locus">Mbur_0873</name>
</gene>
<protein>
    <recommendedName>
        <fullName evidence="1">Argininosuccinate synthase</fullName>
        <ecNumber evidence="1">6.3.4.5</ecNumber>
    </recommendedName>
    <alternativeName>
        <fullName evidence="1">Citrulline--aspartate ligase</fullName>
    </alternativeName>
</protein>